<comment type="function">
    <text evidence="1">Globally modulates RNA abundance by binding to RNase E (Rne) and regulating its endonucleolytic activity. Can modulate Rne action in a substrate-dependent manner by altering the composition of the degradosome. Modulates RNA-binding and helicase activities of the degradosome.</text>
</comment>
<comment type="subunit">
    <text evidence="1">Homotrimer. Binds to both RNA-binding sites in the C-terminal region of Rne and to RhlB.</text>
</comment>
<comment type="subcellular location">
    <subcellularLocation>
        <location evidence="1">Cytoplasm</location>
    </subcellularLocation>
</comment>
<comment type="similarity">
    <text evidence="1">Belongs to the RraA family.</text>
</comment>
<feature type="chain" id="PRO_1000013873" description="Regulator of ribonuclease activity A">
    <location>
        <begin position="1"/>
        <end position="161"/>
    </location>
</feature>
<reference key="1">
    <citation type="journal article" date="2005" name="Nucleic Acids Res.">
        <title>Genome dynamics and diversity of Shigella species, the etiologic agents of bacillary dysentery.</title>
        <authorList>
            <person name="Yang F."/>
            <person name="Yang J."/>
            <person name="Zhang X."/>
            <person name="Chen L."/>
            <person name="Jiang Y."/>
            <person name="Yan Y."/>
            <person name="Tang X."/>
            <person name="Wang J."/>
            <person name="Xiong Z."/>
            <person name="Dong J."/>
            <person name="Xue Y."/>
            <person name="Zhu Y."/>
            <person name="Xu X."/>
            <person name="Sun L."/>
            <person name="Chen S."/>
            <person name="Nie H."/>
            <person name="Peng J."/>
            <person name="Xu J."/>
            <person name="Wang Y."/>
            <person name="Yuan Z."/>
            <person name="Wen Y."/>
            <person name="Yao Z."/>
            <person name="Shen Y."/>
            <person name="Qiang B."/>
            <person name="Hou Y."/>
            <person name="Yu J."/>
            <person name="Jin Q."/>
        </authorList>
    </citation>
    <scope>NUCLEOTIDE SEQUENCE [LARGE SCALE GENOMIC DNA]</scope>
    <source>
        <strain>Sd197</strain>
    </source>
</reference>
<keyword id="KW-0963">Cytoplasm</keyword>
<keyword id="KW-1185">Reference proteome</keyword>
<name>RRAA_SHIDS</name>
<accession>Q32AA2</accession>
<gene>
    <name evidence="1" type="primary">rraA</name>
    <name type="ordered locus">SDY_3808</name>
</gene>
<organism>
    <name type="scientific">Shigella dysenteriae serotype 1 (strain Sd197)</name>
    <dbReference type="NCBI Taxonomy" id="300267"/>
    <lineage>
        <taxon>Bacteria</taxon>
        <taxon>Pseudomonadati</taxon>
        <taxon>Pseudomonadota</taxon>
        <taxon>Gammaproteobacteria</taxon>
        <taxon>Enterobacterales</taxon>
        <taxon>Enterobacteriaceae</taxon>
        <taxon>Shigella</taxon>
    </lineage>
</organism>
<proteinExistence type="inferred from homology"/>
<protein>
    <recommendedName>
        <fullName evidence="1">Regulator of ribonuclease activity A</fullName>
    </recommendedName>
</protein>
<sequence length="161" mass="17341">MKYDTSELCDIYQEDVNVVEPLFSNFGGRASFGGQIITVKCFEDNGLLYDLLEQNGRGRVLVVDGGGSVRRALVDAELARLAVQNEWEGLVIYGAVHQVDDLEELDIGIQAMAAIPVGAAGEGIGESDVRVNFGGVTFFSGDHLYADNTGIILSEDPLDIE</sequence>
<dbReference type="EMBL" id="CP000034">
    <property type="protein sequence ID" value="ABB63753.1"/>
    <property type="molecule type" value="Genomic_DNA"/>
</dbReference>
<dbReference type="RefSeq" id="WP_000872906.1">
    <property type="nucleotide sequence ID" value="NC_007606.1"/>
</dbReference>
<dbReference type="RefSeq" id="YP_405244.1">
    <property type="nucleotide sequence ID" value="NC_007606.1"/>
</dbReference>
<dbReference type="SMR" id="Q32AA2"/>
<dbReference type="STRING" id="300267.SDY_3808"/>
<dbReference type="EnsemblBacteria" id="ABB63753">
    <property type="protein sequence ID" value="ABB63753"/>
    <property type="gene ID" value="SDY_3808"/>
</dbReference>
<dbReference type="KEGG" id="sdy:SDY_3808"/>
<dbReference type="PATRIC" id="fig|300267.13.peg.4498"/>
<dbReference type="HOGENOM" id="CLU_072626_4_0_6"/>
<dbReference type="Proteomes" id="UP000002716">
    <property type="component" value="Chromosome"/>
</dbReference>
<dbReference type="GO" id="GO:0005829">
    <property type="term" value="C:cytosol"/>
    <property type="evidence" value="ECO:0007669"/>
    <property type="project" value="TreeGrafter"/>
</dbReference>
<dbReference type="GO" id="GO:0060698">
    <property type="term" value="F:endoribonuclease inhibitor activity"/>
    <property type="evidence" value="ECO:0007669"/>
    <property type="project" value="UniProtKB-UniRule"/>
</dbReference>
<dbReference type="GO" id="GO:0019899">
    <property type="term" value="F:enzyme binding"/>
    <property type="evidence" value="ECO:0007669"/>
    <property type="project" value="UniProtKB-UniRule"/>
</dbReference>
<dbReference type="GO" id="GO:1902369">
    <property type="term" value="P:negative regulation of RNA catabolic process"/>
    <property type="evidence" value="ECO:0007669"/>
    <property type="project" value="TreeGrafter"/>
</dbReference>
<dbReference type="CDD" id="cd16841">
    <property type="entry name" value="RraA_family"/>
    <property type="match status" value="1"/>
</dbReference>
<dbReference type="FunFam" id="3.50.30.40:FF:000001">
    <property type="entry name" value="Regulator of ribonuclease activity A"/>
    <property type="match status" value="1"/>
</dbReference>
<dbReference type="Gene3D" id="3.50.30.40">
    <property type="entry name" value="Ribonuclease E inhibitor RraA/RraA-like"/>
    <property type="match status" value="1"/>
</dbReference>
<dbReference type="HAMAP" id="MF_00471">
    <property type="entry name" value="RraA"/>
    <property type="match status" value="1"/>
</dbReference>
<dbReference type="InterPro" id="IPR010203">
    <property type="entry name" value="RraA"/>
</dbReference>
<dbReference type="InterPro" id="IPR005493">
    <property type="entry name" value="RraA/RraA-like"/>
</dbReference>
<dbReference type="InterPro" id="IPR036704">
    <property type="entry name" value="RraA/RraA-like_sf"/>
</dbReference>
<dbReference type="InterPro" id="IPR014339">
    <property type="entry name" value="RraA_gpbac"/>
</dbReference>
<dbReference type="NCBIfam" id="TIGR01935">
    <property type="entry name" value="NOT-MenG"/>
    <property type="match status" value="1"/>
</dbReference>
<dbReference type="NCBIfam" id="NF006875">
    <property type="entry name" value="PRK09372.1"/>
    <property type="match status" value="1"/>
</dbReference>
<dbReference type="NCBIfam" id="TIGR02998">
    <property type="entry name" value="RraA_entero"/>
    <property type="match status" value="1"/>
</dbReference>
<dbReference type="PANTHER" id="PTHR33254">
    <property type="entry name" value="4-HYDROXY-4-METHYL-2-OXOGLUTARATE ALDOLASE 3-RELATED"/>
    <property type="match status" value="1"/>
</dbReference>
<dbReference type="PANTHER" id="PTHR33254:SF29">
    <property type="entry name" value="REGULATOR OF RIBONUCLEASE ACTIVITY A"/>
    <property type="match status" value="1"/>
</dbReference>
<dbReference type="Pfam" id="PF03737">
    <property type="entry name" value="RraA-like"/>
    <property type="match status" value="1"/>
</dbReference>
<dbReference type="SUPFAM" id="SSF89562">
    <property type="entry name" value="RraA-like"/>
    <property type="match status" value="1"/>
</dbReference>
<evidence type="ECO:0000255" key="1">
    <source>
        <dbReference type="HAMAP-Rule" id="MF_00471"/>
    </source>
</evidence>